<organismHost>
    <name type="scientific">Enterobacteriaceae</name>
    <dbReference type="NCBI Taxonomy" id="543"/>
</organismHost>
<feature type="chain" id="PRO_0000165065" description="Single-stranded DNA-binding protein">
    <location>
        <begin position="1"/>
        <end position="50" status="greater than"/>
    </location>
</feature>
<feature type="non-terminal residue">
    <location>
        <position position="50"/>
    </location>
</feature>
<protein>
    <recommendedName>
        <fullName>Single-stranded DNA-binding protein</fullName>
    </recommendedName>
    <alternativeName>
        <fullName>Gp32</fullName>
    </alternativeName>
    <alternativeName>
        <fullName>Helix-destabilizing protein</fullName>
    </alternativeName>
</protein>
<accession>O21960</accession>
<dbReference type="EMBL" id="AF033333">
    <property type="protein sequence ID" value="AAB87498.1"/>
    <property type="molecule type" value="Genomic_DNA"/>
</dbReference>
<dbReference type="SMR" id="O21960"/>
<dbReference type="GO" id="GO:0003677">
    <property type="term" value="F:DNA binding"/>
    <property type="evidence" value="ECO:0007669"/>
    <property type="project" value="UniProtKB-KW"/>
</dbReference>
<dbReference type="GO" id="GO:0008270">
    <property type="term" value="F:zinc ion binding"/>
    <property type="evidence" value="ECO:0007669"/>
    <property type="project" value="UniProtKB-KW"/>
</dbReference>
<dbReference type="GO" id="GO:0006310">
    <property type="term" value="P:DNA recombination"/>
    <property type="evidence" value="ECO:0007669"/>
    <property type="project" value="UniProtKB-KW"/>
</dbReference>
<dbReference type="GO" id="GO:0006281">
    <property type="term" value="P:DNA repair"/>
    <property type="evidence" value="ECO:0007669"/>
    <property type="project" value="UniProtKB-KW"/>
</dbReference>
<dbReference type="GO" id="GO:0006260">
    <property type="term" value="P:DNA replication"/>
    <property type="evidence" value="ECO:0007669"/>
    <property type="project" value="UniProtKB-KW"/>
</dbReference>
<dbReference type="Gene3D" id="3.90.198.10">
    <property type="entry name" value="Replication Fork Single-Stranded Dna Binding Protein"/>
    <property type="match status" value="1"/>
</dbReference>
<dbReference type="InterPro" id="IPR012340">
    <property type="entry name" value="NA-bd_OB-fold"/>
</dbReference>
<dbReference type="InterPro" id="IPR044947">
    <property type="entry name" value="Phage_T4_Gp32_ssDNA-bd_sf"/>
</dbReference>
<dbReference type="SUPFAM" id="SSF50249">
    <property type="entry name" value="Nucleic acid-binding proteins"/>
    <property type="match status" value="1"/>
</dbReference>
<comment type="function">
    <text>Binds preferentially to single-stranded DNA and therefore, destabilizes double-stranded DNA. It is involved in DNA replication, repair and recombination. Binds ss-DNA as the replication fork advances and stimulates the replisome processivity and accuracy.</text>
</comment>
<comment type="subunit">
    <text evidence="1">Homodimer in the absence of DNA, monomer when binding DNA.</text>
</comment>
<comment type="miscellaneous">
    <text evidence="1">Interacts with the polymerase and the uvsX and uvsY proteins.</text>
</comment>
<reference key="1">
    <citation type="submission" date="1997-11" db="EMBL/GenBank/DDBJ databases">
        <authorList>
            <person name="Theimer C.A."/>
            <person name="Krisch H.M."/>
            <person name="Giedroc D.P."/>
        </authorList>
    </citation>
    <scope>NUCLEOTIDE SEQUENCE [GENOMIC DNA]</scope>
</reference>
<gene>
    <name type="primary">32</name>
    <name type="synonym">ssb</name>
</gene>
<sequence>MFKRKSTAELAAQMAKLAGNKGGFSSEDKGEWKLKLDNAGNGQAVIRFLP</sequence>
<proteinExistence type="inferred from homology"/>
<keyword id="KW-0227">DNA damage</keyword>
<keyword id="KW-0233">DNA recombination</keyword>
<keyword id="KW-0234">DNA repair</keyword>
<keyword id="KW-0235">DNA replication</keyword>
<keyword id="KW-0238">DNA-binding</keyword>
<keyword id="KW-0479">Metal-binding</keyword>
<keyword id="KW-0862">Zinc</keyword>
<keyword id="KW-0863">Zinc-finger</keyword>
<name>VHED_BPS76</name>
<evidence type="ECO:0000250" key="1"/>
<organism>
    <name type="scientific">Enterobacteria phage SV76</name>
    <name type="common">Bacteriophage SV76</name>
    <dbReference type="NCBI Taxonomy" id="69613"/>
    <lineage>
        <taxon>Viruses</taxon>
        <taxon>Duplodnaviria</taxon>
        <taxon>Heunggongvirae</taxon>
        <taxon>Uroviricota</taxon>
        <taxon>Caudoviricetes</taxon>
        <taxon>Straboviridae</taxon>
        <taxon>Tevenvirinae</taxon>
        <taxon>Tequatrovirus</taxon>
        <taxon>Tequatrovirus T2</taxon>
    </lineage>
</organism>